<gene>
    <name evidence="15" type="primary">glnK</name>
    <name type="synonym">ybaI</name>
    <name type="ordered locus">b0450</name>
    <name type="ordered locus">JW0440</name>
</gene>
<comment type="function">
    <text evidence="2 3 4 5 6 11 12">Involved in the regulation of nitrogen metabolism (PubMed:10760266, PubMed:11847102, PubMed:12366843, PubMed:14668330, PubMed:28538158, PubMed:8843440). Regulates the activity of its targets by protein-protein interaction in response to the nitrogen status of the cell (PubMed:10760266, PubMed:11847102, PubMed:14668330, PubMed:8843440). Involved in the regulation of the ammonium transporter AmtB so as to optimize ammonium uptake under all growth conditions (PubMed:11847102, PubMed:14668330, PubMed:16864585). In nitrogen-limited conditions, GlnK does not interact with AmtB, which remains active and imports ammonium. When extracellular ammonium increases, GlnK associates tightly with AmtB in the inner membrane, thereby inhibiting the transporter activity (PubMed:11847102, PubMed:14668330, PubMed:16864585). Also involved in the regulation of the glutamine synthetase adenylyltransferase/adenylyl-removing (AT/AR) enzyme GlnE and the glutamine synthetase GlnA (PubMed:10760266, PubMed:28538158, PubMed:8843440). In nitrogen-limited conditions, formation of uridylylated GlnB(PII)/GlnK heterotrimers may fine-regulate the activation of GlnA: uridylylated heterotrimers stimulate the deadenylation and the activation of GlnA whereas uridylylated GlnK homotrimers do not stimulate, or hardly stimulate, the deadenylation of GlnA (PubMed:10760266). In addition, regulates the expression of Ntr genes during nitrogen starvation, probably via the control of the levels of phosphorylated NRI during different stages of the response to nitrogen limitation (PubMed:12366843).</text>
</comment>
<comment type="activity regulation">
    <text evidence="3 5 6 7 9 10">Formation of the GlnK-AmtB complex is influenced by intracellular pools of the effector molecules ATP, ADP, Mg(2+) and 2-oxoglutarate (PubMed:16864585, PubMed:20639578). The rapid drop in the 2-oxoglutarate pool upon ammonium influx and a simultaneous, but transient, change in the ATP/ADP ratio promotes AmtB-GlnK complex formation (PubMed:20639578). ADP orients the surface of GlnK for AmtB blockade (PubMed:17190799). The GlnK-AmtB interaction is also controlled by the level of intracellular glutamine and the uridylylation status of GlnK (PubMed:11847102, PubMed:14668330, PubMed:16864585). The uridylylation state of GlnK influences the dynamics of its interaction with AmtB, but association and dissociation of the complex in response to cellular nitrogen status can occur in the absence of GlnK post-translational modification (PubMed:25566239).</text>
</comment>
<comment type="subunit">
    <text evidence="2 3 5 6 7 8 9 13">Homotrimer (PubMed:10760266, PubMed:17220269, PubMed:9733647). In response to elevation of the extracellular ammonium concentration, interacts and forms a complex with AmtB (PubMed:11847102, PubMed:14668330, PubMed:16864585, PubMed:17190799, PubMed:17220269, PubMed:20639578). Binds to the cytoplasmic face of AmtB with a stoichiometry of AmtB(3):GlnK(3) (PubMed:17190799, PubMed:17220269). Sequestration by AmtB is reversible (PubMed:14668330). In nitrogen-poor medium, can form heterotrimers with GlnB (PII protein) (PubMed:10760266).</text>
</comment>
<comment type="interaction">
    <interactant intactId="EBI-559503">
        <id>P0AC55</id>
    </interactant>
    <interactant intactId="EBI-9137905">
        <id>P69681</id>
        <label>amtB</label>
    </interactant>
    <organismsDiffer>false</organismsDiffer>
    <experiments>3</experiments>
</comment>
<comment type="interaction">
    <interactant intactId="EBI-559503">
        <id>P0AC55</id>
    </interactant>
    <interactant intactId="EBI-551053">
        <id>P0A9Z1</id>
        <label>glnB</label>
    </interactant>
    <organismsDiffer>false</organismsDiffer>
    <experiments>3</experiments>
</comment>
<comment type="interaction">
    <interactant intactId="EBI-559503">
        <id>P0AC55</id>
    </interactant>
    <interactant intactId="EBI-552032">
        <id>P27249</id>
        <label>glnD</label>
    </interactant>
    <organismsDiffer>false</organismsDiffer>
    <experiments>3</experiments>
</comment>
<comment type="interaction">
    <interactant intactId="EBI-559503">
        <id>P0AC55</id>
    </interactant>
    <interactant intactId="EBI-559503">
        <id>P0AC55</id>
        <label>glnK</label>
    </interactant>
    <organismsDiffer>false</organismsDiffer>
    <experiments>3</experiments>
</comment>
<comment type="interaction">
    <interactant intactId="EBI-559503">
        <id>P0AC55</id>
    </interactant>
    <interactant intactId="EBI-701156">
        <id>P0AFB5</id>
        <label>glnL</label>
    </interactant>
    <organismsDiffer>false</organismsDiffer>
    <experiments>5</experiments>
</comment>
<comment type="subcellular location">
    <subcellularLocation>
        <location evidence="3 5 6">Cytoplasm</location>
    </subcellularLocation>
    <subcellularLocation>
        <location evidence="3 5 6">Cell inner membrane</location>
    </subcellularLocation>
    <text evidence="3 5 6">During nitrogen limitation, GlnK is predominantly in its fully uridylylated state in the cytoplasmic fraction. In response to nitrogen shock, GlnK is deuridylylated rapidly and associates tightly with AmtB in the inner membrane.</text>
</comment>
<comment type="induction">
    <text evidence="12">Expression is regulated by the nitrogen status (PubMed:8843440). May be regulated through the NRI/NRII two-component regulatory system (PubMed:8843440).</text>
</comment>
<comment type="domain">
    <text evidence="7 8">Interacts with AmtB almost exclusively via a long surface loop containing Tyr-51 (T-loop), the tip of which inserts deeply into the cytoplasmic pore exit, blocking ammonia conduction (PubMed:17190799, PubMed:17220269). Uridylylation probably sterically blocks the T-loop region from interacting with AmtB (PubMed:17190799).</text>
</comment>
<comment type="PTM">
    <text evidence="3 6 9 12">Uridylylated/deuridylylated by GlnD (PubMed:11847102, PubMed:8843440). Fully uridylylated in nitrogen-limited conditions and deuridylylated when extracellular ammonium increases (PubMed:11847102, PubMed:20639578). Uridylylation abrogates binding to AmtB (PubMed:11847102, PubMed:16864585).</text>
</comment>
<comment type="disruption phenotype">
    <text evidence="4">Mutant lacking this gene shows very high expression of the glnK and nac promoters in nitrogen-starved cells, and has a severe defect in the growth rate recovery in ammonia after nitrogen starvation.</text>
</comment>
<comment type="similarity">
    <text evidence="1">Belongs to the P(II) protein family.</text>
</comment>
<comment type="sequence caution" evidence="16">
    <conflict type="erroneous initiation">
        <sequence resource="EMBL-CDS" id="AAB40206"/>
    </conflict>
</comment>
<protein>
    <recommendedName>
        <fullName evidence="16">Nitrogen regulatory protein GlnK</fullName>
    </recommendedName>
    <alternativeName>
        <fullName>Nitrogen regulatory protein P-II 2</fullName>
    </alternativeName>
    <alternativeName>
        <fullName evidence="14">PII-like protein</fullName>
    </alternativeName>
</protein>
<organism>
    <name type="scientific">Escherichia coli (strain K12)</name>
    <dbReference type="NCBI Taxonomy" id="83333"/>
    <lineage>
        <taxon>Bacteria</taxon>
        <taxon>Pseudomonadati</taxon>
        <taxon>Pseudomonadota</taxon>
        <taxon>Gammaproteobacteria</taxon>
        <taxon>Enterobacterales</taxon>
        <taxon>Enterobacteriaceae</taxon>
        <taxon>Escherichia</taxon>
    </lineage>
</organism>
<keyword id="KW-0002">3D-structure</keyword>
<keyword id="KW-0067">ATP-binding</keyword>
<keyword id="KW-0997">Cell inner membrane</keyword>
<keyword id="KW-1003">Cell membrane</keyword>
<keyword id="KW-0963">Cytoplasm</keyword>
<keyword id="KW-0903">Direct protein sequencing</keyword>
<keyword id="KW-0472">Membrane</keyword>
<keyword id="KW-0547">Nucleotide-binding</keyword>
<keyword id="KW-0597">Phosphoprotein</keyword>
<keyword id="KW-1185">Reference proteome</keyword>
<accession>P0AC55</accession>
<accession>P38504</accession>
<accession>P77118</accession>
<accession>Q2MBX6</accession>
<sequence length="112" mass="12259">MKLVTVIIKPFKLEDVREALSSIGIQGLTVTEVKGFGRQKGHAELYRGAEYSVNFLPKVKIDVAIADDQLDEVIDIVSKAAYTGKIGDGKIFVAELQRVIRIRTGEADEAAL</sequence>
<evidence type="ECO:0000255" key="1">
    <source>
        <dbReference type="PROSITE-ProRule" id="PRU00675"/>
    </source>
</evidence>
<evidence type="ECO:0000269" key="2">
    <source>
    </source>
</evidence>
<evidence type="ECO:0000269" key="3">
    <source>
    </source>
</evidence>
<evidence type="ECO:0000269" key="4">
    <source>
    </source>
</evidence>
<evidence type="ECO:0000269" key="5">
    <source>
    </source>
</evidence>
<evidence type="ECO:0000269" key="6">
    <source>
    </source>
</evidence>
<evidence type="ECO:0000269" key="7">
    <source>
    </source>
</evidence>
<evidence type="ECO:0000269" key="8">
    <source>
    </source>
</evidence>
<evidence type="ECO:0000269" key="9">
    <source>
    </source>
</evidence>
<evidence type="ECO:0000269" key="10">
    <source>
    </source>
</evidence>
<evidence type="ECO:0000269" key="11">
    <source>
    </source>
</evidence>
<evidence type="ECO:0000269" key="12">
    <source>
    </source>
</evidence>
<evidence type="ECO:0000269" key="13">
    <source>
    </source>
</evidence>
<evidence type="ECO:0000303" key="14">
    <source>
    </source>
</evidence>
<evidence type="ECO:0000303" key="15">
    <source>
    </source>
</evidence>
<evidence type="ECO:0000305" key="16"/>
<evidence type="ECO:0007744" key="17">
    <source>
        <dbReference type="PDB" id="1GNK"/>
    </source>
</evidence>
<evidence type="ECO:0007744" key="18">
    <source>
        <dbReference type="PDB" id="2GNK"/>
    </source>
</evidence>
<evidence type="ECO:0007744" key="19">
    <source>
        <dbReference type="PDB" id="2NS1"/>
    </source>
</evidence>
<evidence type="ECO:0007744" key="20">
    <source>
        <dbReference type="PDB" id="2NUU"/>
    </source>
</evidence>
<evidence type="ECO:0007829" key="21">
    <source>
        <dbReference type="PDB" id="2GNK"/>
    </source>
</evidence>
<evidence type="ECO:0007829" key="22">
    <source>
        <dbReference type="PDB" id="2NS1"/>
    </source>
</evidence>
<name>GLNK_ECOLI</name>
<reference key="1">
    <citation type="journal article" date="1995" name="FEMS Microbiol. Lett.">
        <title>An additional PII in Escherichia coli: a new regulatory protein in the glutamine synthetase cascade.</title>
        <authorList>
            <person name="Vanheeswijk W.C."/>
            <person name="Stegeman B."/>
            <person name="Hoving S."/>
            <person name="Molenaar D."/>
            <person name="Kahn D."/>
            <person name="Westerhoff H.V."/>
        </authorList>
    </citation>
    <scope>NUCLEOTIDE SEQUENCE [GENOMIC DNA]</scope>
    <source>
        <strain>K12 / W3110 / ATCC 27325 / DSM 5911</strain>
    </source>
</reference>
<reference key="2">
    <citation type="submission" date="1997-01" db="EMBL/GenBank/DDBJ databases">
        <title>Sequence of minutes 4-25 of Escherichia coli.</title>
        <authorList>
            <person name="Chung E."/>
            <person name="Allen E."/>
            <person name="Araujo R."/>
            <person name="Aparicio A.M."/>
            <person name="Davis K."/>
            <person name="Duncan M."/>
            <person name="Federspiel N."/>
            <person name="Hyman R."/>
            <person name="Kalman S."/>
            <person name="Komp C."/>
            <person name="Kurdi O."/>
            <person name="Lew H."/>
            <person name="Lin D."/>
            <person name="Namath A."/>
            <person name="Oefner P."/>
            <person name="Roberts D."/>
            <person name="Schramm S."/>
            <person name="Davis R.W."/>
        </authorList>
    </citation>
    <scope>NUCLEOTIDE SEQUENCE [LARGE SCALE GENOMIC DNA]</scope>
    <source>
        <strain>K12 / MG1655 / ATCC 47076</strain>
    </source>
</reference>
<reference key="3">
    <citation type="journal article" date="1997" name="Science">
        <title>The complete genome sequence of Escherichia coli K-12.</title>
        <authorList>
            <person name="Blattner F.R."/>
            <person name="Plunkett G. III"/>
            <person name="Bloch C.A."/>
            <person name="Perna N.T."/>
            <person name="Burland V."/>
            <person name="Riley M."/>
            <person name="Collado-Vides J."/>
            <person name="Glasner J.D."/>
            <person name="Rode C.K."/>
            <person name="Mayhew G.F."/>
            <person name="Gregor J."/>
            <person name="Davis N.W."/>
            <person name="Kirkpatrick H.A."/>
            <person name="Goeden M.A."/>
            <person name="Rose D.J."/>
            <person name="Mau B."/>
            <person name="Shao Y."/>
        </authorList>
    </citation>
    <scope>NUCLEOTIDE SEQUENCE [LARGE SCALE GENOMIC DNA]</scope>
    <source>
        <strain>K12 / MG1655 / ATCC 47076</strain>
    </source>
</reference>
<reference key="4">
    <citation type="journal article" date="2006" name="Mol. Syst. Biol.">
        <title>Highly accurate genome sequences of Escherichia coli K-12 strains MG1655 and W3110.</title>
        <authorList>
            <person name="Hayashi K."/>
            <person name="Morooka N."/>
            <person name="Yamamoto Y."/>
            <person name="Fujita K."/>
            <person name="Isono K."/>
            <person name="Choi S."/>
            <person name="Ohtsubo E."/>
            <person name="Baba T."/>
            <person name="Wanner B.L."/>
            <person name="Mori H."/>
            <person name="Horiuchi T."/>
        </authorList>
    </citation>
    <scope>NUCLEOTIDE SEQUENCE [LARGE SCALE GENOMIC DNA]</scope>
    <source>
        <strain>K12 / W3110 / ATCC 27325 / DSM 5911</strain>
    </source>
</reference>
<reference key="5">
    <citation type="journal article" date="2006" name="J. Biol. Chem.">
        <title>In vitro analysis of the Escherichia coli AmtB-GlnK complex reveals a stoichiometric interaction and sensitivity to ATP and 2-oxoglutarate.</title>
        <authorList>
            <person name="Durand A."/>
            <person name="Merrick M."/>
        </authorList>
    </citation>
    <scope>PROTEIN SEQUENCE OF 1-7</scope>
    <scope>FUNCTION</scope>
    <scope>ACTIVITY REGULATION</scope>
    <scope>INTERACTION WITH AMTB</scope>
    <scope>SUBCELLULAR LOCATION</scope>
    <scope>URIDYLYLATION</scope>
</reference>
<reference key="6">
    <citation type="journal article" date="1993" name="Gene">
        <title>Cloning and organization of the abc and mdl genes of Escherichia coli: relationship to eukaryotic multidrug resistance.</title>
        <authorList>
            <person name="Allikmets R."/>
            <person name="Gerrard B.C."/>
            <person name="Court D."/>
            <person name="Dean M.C."/>
        </authorList>
    </citation>
    <scope>IDENTIFICATION</scope>
</reference>
<reference key="7">
    <citation type="journal article" date="1996" name="Mol. Microbiol.">
        <title>An alternative PII protein in the regulation of glutamine synthetase in Escherichia coli.</title>
        <authorList>
            <person name="van Heeswijk W.C."/>
            <person name="Hoving S."/>
            <person name="Molenaar D."/>
            <person name="Stegeman B."/>
            <person name="Kahn D."/>
            <person name="Westerhoff H.V."/>
        </authorList>
    </citation>
    <scope>FUNCTION</scope>
    <scope>INDUCTION</scope>
    <scope>URIDYLYLATION</scope>
</reference>
<reference key="8">
    <citation type="journal article" date="2000" name="Proc. Natl. Acad. Sci. U.S.A.">
        <title>The Escherichia coli signal transducers PII (GlnB) and GlnK form heterotrimers in vivo: fine tuning the nitrogen signal cascade.</title>
        <authorList>
            <person name="van Heeswijk W.C."/>
            <person name="Wen D."/>
            <person name="Clancy P."/>
            <person name="Jaggi R."/>
            <person name="Ollis D.L."/>
            <person name="Westerhoff H.V."/>
            <person name="Vasudevan S.G."/>
        </authorList>
    </citation>
    <scope>FUNCTION</scope>
    <scope>SUBUNIT</scope>
    <scope>INTERACTION WITH GLNB</scope>
</reference>
<reference key="9">
    <citation type="journal article" date="2002" name="EMBO J.">
        <title>Membrane sequestration of the signal transduction protein GlnK by the ammonium transporter AmtB.</title>
        <authorList>
            <person name="Coutts G."/>
            <person name="Thomas G."/>
            <person name="Blakey D."/>
            <person name="Merrick M."/>
        </authorList>
    </citation>
    <scope>FUNCTION</scope>
    <scope>ACTIVITY REGULATION</scope>
    <scope>INTERACTION WITH AMTB</scope>
    <scope>SUBCELLULAR LOCATION</scope>
    <scope>URIDYLYLATION</scope>
</reference>
<reference key="10">
    <citation type="journal article" date="2002" name="Mol. Microbiol.">
        <title>Physiological role of the GlnK signal transduction protein of Escherichia coli: survival of nitrogen starvation.</title>
        <authorList>
            <person name="Blauwkamp T.A."/>
            <person name="Ninfa A.J."/>
        </authorList>
    </citation>
    <scope>FUNCTION</scope>
    <scope>DISRUPTION PHENOTYPE</scope>
</reference>
<reference key="11">
    <citation type="journal article" date="2004" name="J. Biol. Chem.">
        <title>Ammonium sensing in Escherichia coli. Role of the ammonium transporter AmtB and AmtB-GlnK complex formation.</title>
        <authorList>
            <person name="Javelle A."/>
            <person name="Severi E."/>
            <person name="Thornton J."/>
            <person name="Merrick M."/>
        </authorList>
    </citation>
    <scope>FUNCTION</scope>
    <scope>ACTIVITY REGULATION</scope>
    <scope>INTERACTION WITH AMTB</scope>
    <scope>SUBCELLULAR LOCATION</scope>
    <scope>MUTAGENESIS OF TYR-51</scope>
</reference>
<reference key="12">
    <citation type="journal article" date="2010" name="J. Biol. Chem.">
        <title>Control of AmtB-GlnK complex formation by intracellular levels of ATP, ADP, and 2-oxoglutarate.</title>
        <authorList>
            <person name="Radchenko M.V."/>
            <person name="Thornton J."/>
            <person name="Merrick M."/>
        </authorList>
    </citation>
    <scope>ACTIVITY REGULATION</scope>
    <scope>INTERACTION WITH AMTB</scope>
    <scope>URIDYLYLATION</scope>
</reference>
<reference key="13">
    <citation type="journal article" date="2014" name="Front. Microbiol.">
        <title>Association and dissociation of the GlnK-AmtB complex in response to cellular nitrogen status can occur in the absence of GlnK post-translational modification.</title>
        <authorList>
            <person name="Radchenko M.V."/>
            <person name="Thornton J."/>
            <person name="Merrick M."/>
        </authorList>
    </citation>
    <scope>ACTIVITY REGULATION</scope>
    <scope>MUTAGENESIS OF ARG-47 AND TYR-51</scope>
</reference>
<reference key="14">
    <citation type="journal article" date="2017" name="Biophys. J.">
        <title>GlnK facilitates the dynamic regulation of bacterial nitrogen assimilation.</title>
        <authorList>
            <person name="Gosztolai A."/>
            <person name="Schumacher J."/>
            <person name="Behrends V."/>
            <person name="Bundy J.G."/>
            <person name="Heydenreich F."/>
            <person name="Bennett M.H."/>
            <person name="Buck M."/>
            <person name="Barahona M."/>
        </authorList>
    </citation>
    <scope>FUNCTION</scope>
</reference>
<reference evidence="17 18" key="15">
    <citation type="journal article" date="1998" name="J. Mol. Biol.">
        <title>GlnK, a PII-homologue: structure reveals ATP binding site and indicates how the T-loops may be involved in molecular recognition.</title>
        <authorList>
            <person name="Xu Y."/>
            <person name="Cheah E."/>
            <person name="Carr P.D."/>
            <person name="van Heeswijk W.C."/>
            <person name="Westerhoff H.V."/>
            <person name="Vasudevan S.G."/>
            <person name="Ollis D.L."/>
        </authorList>
    </citation>
    <scope>X-RAY CRYSTALLOGRAPHY (2.0 ANGSTROMS) IN COMPLEX WITH ATP</scope>
    <scope>SUBUNIT</scope>
</reference>
<reference evidence="20" key="16">
    <citation type="journal article" date="2007" name="Proc. Natl. Acad. Sci. U.S.A.">
        <title>The crystal structure of the Escherichia coli AmtB-GlnK complex reveals how GlnK regulates the ammonia channel.</title>
        <authorList>
            <person name="Conroy M.J."/>
            <person name="Durand A."/>
            <person name="Lupo D."/>
            <person name="Li X.D."/>
            <person name="Bullough P.A."/>
            <person name="Winkler F.K."/>
            <person name="Merrick M."/>
        </authorList>
    </citation>
    <scope>X-RAY CRYSTALLOGRAPHY (2.50 ANGSTROMS) IN COMPLEX WITH ADP AND AMTB</scope>
    <scope>SUBUNIT</scope>
    <scope>INTERACTION WITH AMTB</scope>
    <scope>DOMAIN</scope>
</reference>
<reference evidence="19" key="17">
    <citation type="journal article" date="2007" name="Proc. Natl. Acad. Sci. U.S.A.">
        <title>Inhibitory complex of the transmembrane ammonia channel, AmtB, and the cytosolic regulatory protein, GlnK, at 1.96 A.</title>
        <authorList>
            <person name="Gruswitz F."/>
            <person name="O'Connell J. III"/>
            <person name="Stroud R.M."/>
        </authorList>
    </citation>
    <scope>X-RAY CRYSTALLOGRAPHY (1.96 ANGSTROMS) IN COMPLEX WITH ADP AND AMTB</scope>
    <scope>ACTIVITY REGULATION</scope>
    <scope>INTERACTION WITH AMTB</scope>
    <scope>DOMAIN</scope>
</reference>
<proteinExistence type="evidence at protein level"/>
<feature type="chain" id="PRO_0000139772" description="Nitrogen regulatory protein GlnK">
    <location>
        <begin position="1"/>
        <end position="112"/>
    </location>
</feature>
<feature type="binding site" evidence="8 20">
    <location>
        <position position="29"/>
    </location>
    <ligand>
        <name>ADP</name>
        <dbReference type="ChEBI" id="CHEBI:456216"/>
    </ligand>
</feature>
<feature type="binding site" evidence="13 18">
    <location>
        <position position="37"/>
    </location>
    <ligand>
        <name>ATP</name>
        <dbReference type="ChEBI" id="CHEBI:30616"/>
    </ligand>
</feature>
<feature type="binding site" evidence="7 8 19 20">
    <location>
        <begin position="38"/>
        <end position="39"/>
    </location>
    <ligand>
        <name>ADP</name>
        <dbReference type="ChEBI" id="CHEBI:456216"/>
    </ligand>
</feature>
<feature type="binding site" evidence="8 20">
    <location>
        <position position="64"/>
    </location>
    <ligand>
        <name>ADP</name>
        <dbReference type="ChEBI" id="CHEBI:456216"/>
    </ligand>
</feature>
<feature type="binding site" evidence="13 18">
    <location>
        <position position="64"/>
    </location>
    <ligand>
        <name>ATP</name>
        <dbReference type="ChEBI" id="CHEBI:30616"/>
    </ligand>
</feature>
<feature type="binding site" evidence="7 8 19 20">
    <location>
        <begin position="87"/>
        <end position="90"/>
    </location>
    <ligand>
        <name>ADP</name>
        <dbReference type="ChEBI" id="CHEBI:456216"/>
    </ligand>
</feature>
<feature type="binding site" evidence="13 18">
    <location>
        <begin position="87"/>
        <end position="90"/>
    </location>
    <ligand>
        <name>ATP</name>
        <dbReference type="ChEBI" id="CHEBI:30616"/>
    </ligand>
</feature>
<feature type="binding site" evidence="8 20">
    <location>
        <begin position="101"/>
        <end position="103"/>
    </location>
    <ligand>
        <name>ADP</name>
        <dbReference type="ChEBI" id="CHEBI:456216"/>
    </ligand>
</feature>
<feature type="binding site" evidence="13 18">
    <location>
        <begin position="101"/>
        <end position="103"/>
    </location>
    <ligand>
        <name>ATP</name>
        <dbReference type="ChEBI" id="CHEBI:30616"/>
    </ligand>
</feature>
<feature type="modified residue" description="O-UMP-tyrosine" evidence="1">
    <location>
        <position position="51"/>
    </location>
</feature>
<feature type="mutagenesis site" description="Shows an identical membrane sequestration profile to the wild-type. Reuridylylation is slightly longer." evidence="10">
    <original>R</original>
    <variation>A</variation>
    <location>
        <position position="47"/>
    </location>
</feature>
<feature type="mutagenesis site" description="Fully deuridylylated regardless of the N-status of the cell. Still responds to ammonium shock by becoming rapidly sequestered to the membrane. Sequestration rate is significantly more rapid." evidence="10">
    <original>Y</original>
    <variation>A</variation>
    <location>
        <position position="51"/>
    </location>
</feature>
<feature type="mutagenesis site" description="Leads to complete inhibition of AmtB activity." evidence="5">
    <original>Y</original>
    <variation>F</variation>
    <location>
        <position position="51"/>
    </location>
</feature>
<feature type="strand" evidence="22">
    <location>
        <begin position="1"/>
        <end position="8"/>
    </location>
</feature>
<feature type="helix" evidence="22">
    <location>
        <begin position="10"/>
        <end position="12"/>
    </location>
</feature>
<feature type="helix" evidence="22">
    <location>
        <begin position="13"/>
        <end position="22"/>
    </location>
</feature>
<feature type="strand" evidence="22">
    <location>
        <begin position="29"/>
        <end position="35"/>
    </location>
</feature>
<feature type="strand" evidence="22">
    <location>
        <begin position="37"/>
        <end position="39"/>
    </location>
</feature>
<feature type="strand" evidence="22">
    <location>
        <begin position="44"/>
        <end position="46"/>
    </location>
</feature>
<feature type="strand" evidence="22">
    <location>
        <begin position="49"/>
        <end position="51"/>
    </location>
</feature>
<feature type="strand" evidence="22">
    <location>
        <begin position="56"/>
        <end position="66"/>
    </location>
</feature>
<feature type="helix" evidence="22">
    <location>
        <begin position="67"/>
        <end position="69"/>
    </location>
</feature>
<feature type="helix" evidence="22">
    <location>
        <begin position="70"/>
        <end position="81"/>
    </location>
</feature>
<feature type="strand" evidence="21">
    <location>
        <begin position="84"/>
        <end position="86"/>
    </location>
</feature>
<feature type="strand" evidence="22">
    <location>
        <begin position="90"/>
        <end position="97"/>
    </location>
</feature>
<feature type="turn" evidence="22">
    <location>
        <begin position="102"/>
        <end position="104"/>
    </location>
</feature>
<feature type="helix" evidence="22">
    <location>
        <begin position="108"/>
        <end position="111"/>
    </location>
</feature>
<dbReference type="EMBL" id="U40429">
    <property type="protein sequence ID" value="AAD14836.1"/>
    <property type="molecule type" value="Genomic_DNA"/>
</dbReference>
<dbReference type="EMBL" id="S79842">
    <property type="protein sequence ID" value="AAA87955.1"/>
    <property type="molecule type" value="Genomic_DNA"/>
</dbReference>
<dbReference type="EMBL" id="U82664">
    <property type="protein sequence ID" value="AAB40206.1"/>
    <property type="status" value="ALT_INIT"/>
    <property type="molecule type" value="Genomic_DNA"/>
</dbReference>
<dbReference type="EMBL" id="U00096">
    <property type="protein sequence ID" value="AAC73553.1"/>
    <property type="molecule type" value="Genomic_DNA"/>
</dbReference>
<dbReference type="EMBL" id="AP009048">
    <property type="protein sequence ID" value="BAE76230.1"/>
    <property type="molecule type" value="Genomic_DNA"/>
</dbReference>
<dbReference type="PIR" id="B64775">
    <property type="entry name" value="B64775"/>
</dbReference>
<dbReference type="RefSeq" id="NP_414984.1">
    <property type="nucleotide sequence ID" value="NC_000913.3"/>
</dbReference>
<dbReference type="RefSeq" id="WP_000780338.1">
    <property type="nucleotide sequence ID" value="NZ_STEB01000007.1"/>
</dbReference>
<dbReference type="PDB" id="1GNK">
    <property type="method" value="X-ray"/>
    <property type="resolution" value="2.00 A"/>
    <property type="chains" value="A/B=1-112"/>
</dbReference>
<dbReference type="PDB" id="2GNK">
    <property type="method" value="X-ray"/>
    <property type="resolution" value="2.00 A"/>
    <property type="chains" value="A=1-112"/>
</dbReference>
<dbReference type="PDB" id="2NS1">
    <property type="method" value="X-ray"/>
    <property type="resolution" value="1.96 A"/>
    <property type="chains" value="B=1-112"/>
</dbReference>
<dbReference type="PDB" id="2NUU">
    <property type="method" value="X-ray"/>
    <property type="resolution" value="2.50 A"/>
    <property type="chains" value="G/H/I/J/K/L=1-112"/>
</dbReference>
<dbReference type="PDBsum" id="1GNK"/>
<dbReference type="PDBsum" id="2GNK"/>
<dbReference type="PDBsum" id="2NS1"/>
<dbReference type="PDBsum" id="2NUU"/>
<dbReference type="SMR" id="P0AC55"/>
<dbReference type="BioGRID" id="4263149">
    <property type="interactions" value="17"/>
</dbReference>
<dbReference type="BioGRID" id="849476">
    <property type="interactions" value="6"/>
</dbReference>
<dbReference type="DIP" id="DIP-35006N"/>
<dbReference type="FunCoup" id="P0AC55">
    <property type="interactions" value="477"/>
</dbReference>
<dbReference type="IntAct" id="P0AC55">
    <property type="interactions" value="14"/>
</dbReference>
<dbReference type="STRING" id="511145.b0450"/>
<dbReference type="jPOST" id="P0AC55"/>
<dbReference type="PaxDb" id="511145-b0450"/>
<dbReference type="EnsemblBacteria" id="AAC73553">
    <property type="protein sequence ID" value="AAC73553"/>
    <property type="gene ID" value="b0450"/>
</dbReference>
<dbReference type="GeneID" id="93777000"/>
<dbReference type="GeneID" id="945087"/>
<dbReference type="KEGG" id="ecj:JW0440"/>
<dbReference type="KEGG" id="eco:b0450"/>
<dbReference type="KEGG" id="ecoc:C3026_02205"/>
<dbReference type="PATRIC" id="fig|1411691.4.peg.1825"/>
<dbReference type="EchoBASE" id="EB2108"/>
<dbReference type="eggNOG" id="COG0347">
    <property type="taxonomic scope" value="Bacteria"/>
</dbReference>
<dbReference type="HOGENOM" id="CLU_082268_0_0_6"/>
<dbReference type="InParanoid" id="P0AC55"/>
<dbReference type="OMA" id="YRGTEHV"/>
<dbReference type="OrthoDB" id="9802729at2"/>
<dbReference type="PhylomeDB" id="P0AC55"/>
<dbReference type="BioCyc" id="EcoCyc:PROTEIN-PII2"/>
<dbReference type="BioCyc" id="MetaCyc:PROTEIN-PII2"/>
<dbReference type="EvolutionaryTrace" id="P0AC55"/>
<dbReference type="PRO" id="PR:P0AC55"/>
<dbReference type="Proteomes" id="UP000000625">
    <property type="component" value="Chromosome"/>
</dbReference>
<dbReference type="GO" id="GO:0005829">
    <property type="term" value="C:cytosol"/>
    <property type="evidence" value="ECO:0000318"/>
    <property type="project" value="GO_Central"/>
</dbReference>
<dbReference type="GO" id="GO:0005886">
    <property type="term" value="C:plasma membrane"/>
    <property type="evidence" value="ECO:0007669"/>
    <property type="project" value="UniProtKB-SubCell"/>
</dbReference>
<dbReference type="GO" id="GO:0005524">
    <property type="term" value="F:ATP binding"/>
    <property type="evidence" value="ECO:0000318"/>
    <property type="project" value="GO_Central"/>
</dbReference>
<dbReference type="GO" id="GO:0030234">
    <property type="term" value="F:enzyme regulator activity"/>
    <property type="evidence" value="ECO:0000318"/>
    <property type="project" value="GO_Central"/>
</dbReference>
<dbReference type="GO" id="GO:0042802">
    <property type="term" value="F:identical protein binding"/>
    <property type="evidence" value="ECO:0000353"/>
    <property type="project" value="IntAct"/>
</dbReference>
<dbReference type="GO" id="GO:0045848">
    <property type="term" value="P:positive regulation of nitrogen utilization"/>
    <property type="evidence" value="ECO:0000315"/>
    <property type="project" value="EcoCyc"/>
</dbReference>
<dbReference type="GO" id="GO:0006808">
    <property type="term" value="P:regulation of nitrogen utilization"/>
    <property type="evidence" value="ECO:0000318"/>
    <property type="project" value="GO_Central"/>
</dbReference>
<dbReference type="FunFam" id="3.30.70.120:FF:000001">
    <property type="entry name" value="Nitrogen regulatory protein P-II"/>
    <property type="match status" value="1"/>
</dbReference>
<dbReference type="Gene3D" id="3.30.70.120">
    <property type="match status" value="1"/>
</dbReference>
<dbReference type="InterPro" id="IPR002187">
    <property type="entry name" value="N-reg_PII"/>
</dbReference>
<dbReference type="InterPro" id="IPR011322">
    <property type="entry name" value="N-reg_PII-like_a/b"/>
</dbReference>
<dbReference type="InterPro" id="IPR015867">
    <property type="entry name" value="N-reg_PII/ATP_PRibTrfase_C"/>
</dbReference>
<dbReference type="InterPro" id="IPR017918">
    <property type="entry name" value="N-reg_PII_CS"/>
</dbReference>
<dbReference type="InterPro" id="IPR002332">
    <property type="entry name" value="N-reg_PII_urydylation_site"/>
</dbReference>
<dbReference type="NCBIfam" id="NF007946">
    <property type="entry name" value="PRK10665.1"/>
    <property type="match status" value="1"/>
</dbReference>
<dbReference type="PANTHER" id="PTHR30115:SF20">
    <property type="entry name" value="NITROGEN REGULATORY PROTEIN GLNK"/>
    <property type="match status" value="1"/>
</dbReference>
<dbReference type="PANTHER" id="PTHR30115">
    <property type="entry name" value="NITROGEN REGULATORY PROTEIN P-II"/>
    <property type="match status" value="1"/>
</dbReference>
<dbReference type="Pfam" id="PF00543">
    <property type="entry name" value="P-II"/>
    <property type="match status" value="1"/>
</dbReference>
<dbReference type="PIRSF" id="PIRSF039144">
    <property type="entry name" value="GlnB"/>
    <property type="match status" value="1"/>
</dbReference>
<dbReference type="PRINTS" id="PR00340">
    <property type="entry name" value="PIIGLNB"/>
</dbReference>
<dbReference type="SMART" id="SM00938">
    <property type="entry name" value="P-II"/>
    <property type="match status" value="1"/>
</dbReference>
<dbReference type="SUPFAM" id="SSF54913">
    <property type="entry name" value="GlnB-like"/>
    <property type="match status" value="1"/>
</dbReference>
<dbReference type="PROSITE" id="PS00638">
    <property type="entry name" value="PII_GLNB_CTER"/>
    <property type="match status" value="1"/>
</dbReference>
<dbReference type="PROSITE" id="PS51343">
    <property type="entry name" value="PII_GLNB_DOM"/>
    <property type="match status" value="1"/>
</dbReference>
<dbReference type="PROSITE" id="PS00496">
    <property type="entry name" value="PII_GLNB_UMP"/>
    <property type="match status" value="1"/>
</dbReference>